<gene>
    <name evidence="1" type="primary">rplD</name>
    <name type="ordered locus">THEYE_A1445</name>
</gene>
<dbReference type="EMBL" id="CP001147">
    <property type="protein sequence ID" value="ACI22114.1"/>
    <property type="molecule type" value="Genomic_DNA"/>
</dbReference>
<dbReference type="RefSeq" id="WP_012546805.1">
    <property type="nucleotide sequence ID" value="NC_011296.1"/>
</dbReference>
<dbReference type="RefSeq" id="YP_002249244.1">
    <property type="nucleotide sequence ID" value="NC_011296.1"/>
</dbReference>
<dbReference type="SMR" id="B5YG46"/>
<dbReference type="FunCoup" id="B5YG46">
    <property type="interactions" value="537"/>
</dbReference>
<dbReference type="STRING" id="289376.THEYE_A1445"/>
<dbReference type="EnsemblBacteria" id="ACI22114">
    <property type="protein sequence ID" value="ACI22114"/>
    <property type="gene ID" value="THEYE_A1445"/>
</dbReference>
<dbReference type="KEGG" id="tye:THEYE_A1445"/>
<dbReference type="PATRIC" id="fig|289376.4.peg.1406"/>
<dbReference type="eggNOG" id="COG0088">
    <property type="taxonomic scope" value="Bacteria"/>
</dbReference>
<dbReference type="HOGENOM" id="CLU_041575_5_2_0"/>
<dbReference type="InParanoid" id="B5YG46"/>
<dbReference type="OrthoDB" id="9803201at2"/>
<dbReference type="Proteomes" id="UP000000718">
    <property type="component" value="Chromosome"/>
</dbReference>
<dbReference type="GO" id="GO:1990904">
    <property type="term" value="C:ribonucleoprotein complex"/>
    <property type="evidence" value="ECO:0007669"/>
    <property type="project" value="UniProtKB-KW"/>
</dbReference>
<dbReference type="GO" id="GO:0005840">
    <property type="term" value="C:ribosome"/>
    <property type="evidence" value="ECO:0007669"/>
    <property type="project" value="UniProtKB-KW"/>
</dbReference>
<dbReference type="GO" id="GO:0019843">
    <property type="term" value="F:rRNA binding"/>
    <property type="evidence" value="ECO:0007669"/>
    <property type="project" value="UniProtKB-UniRule"/>
</dbReference>
<dbReference type="GO" id="GO:0003735">
    <property type="term" value="F:structural constituent of ribosome"/>
    <property type="evidence" value="ECO:0000318"/>
    <property type="project" value="GO_Central"/>
</dbReference>
<dbReference type="GO" id="GO:0006412">
    <property type="term" value="P:translation"/>
    <property type="evidence" value="ECO:0007669"/>
    <property type="project" value="UniProtKB-UniRule"/>
</dbReference>
<dbReference type="FunFam" id="3.40.1370.10:FF:000035">
    <property type="entry name" value="50S ribosomal protein L4"/>
    <property type="match status" value="1"/>
</dbReference>
<dbReference type="Gene3D" id="3.40.1370.10">
    <property type="match status" value="1"/>
</dbReference>
<dbReference type="HAMAP" id="MF_01328_B">
    <property type="entry name" value="Ribosomal_uL4_B"/>
    <property type="match status" value="1"/>
</dbReference>
<dbReference type="InterPro" id="IPR002136">
    <property type="entry name" value="Ribosomal_uL4"/>
</dbReference>
<dbReference type="InterPro" id="IPR013005">
    <property type="entry name" value="Ribosomal_uL4-like"/>
</dbReference>
<dbReference type="InterPro" id="IPR023574">
    <property type="entry name" value="Ribosomal_uL4_dom_sf"/>
</dbReference>
<dbReference type="NCBIfam" id="TIGR03953">
    <property type="entry name" value="rplD_bact"/>
    <property type="match status" value="1"/>
</dbReference>
<dbReference type="PANTHER" id="PTHR10746">
    <property type="entry name" value="50S RIBOSOMAL PROTEIN L4"/>
    <property type="match status" value="1"/>
</dbReference>
<dbReference type="PANTHER" id="PTHR10746:SF6">
    <property type="entry name" value="LARGE RIBOSOMAL SUBUNIT PROTEIN UL4M"/>
    <property type="match status" value="1"/>
</dbReference>
<dbReference type="Pfam" id="PF00573">
    <property type="entry name" value="Ribosomal_L4"/>
    <property type="match status" value="1"/>
</dbReference>
<dbReference type="SUPFAM" id="SSF52166">
    <property type="entry name" value="Ribosomal protein L4"/>
    <property type="match status" value="1"/>
</dbReference>
<feature type="chain" id="PRO_1000142201" description="Large ribosomal subunit protein uL4">
    <location>
        <begin position="1"/>
        <end position="210"/>
    </location>
</feature>
<feature type="region of interest" description="Disordered" evidence="2">
    <location>
        <begin position="49"/>
        <end position="76"/>
    </location>
</feature>
<feature type="compositionally biased region" description="Basic residues" evidence="2">
    <location>
        <begin position="63"/>
        <end position="76"/>
    </location>
</feature>
<name>RL4_THEYD</name>
<protein>
    <recommendedName>
        <fullName evidence="1">Large ribosomal subunit protein uL4</fullName>
    </recommendedName>
    <alternativeName>
        <fullName evidence="3">50S ribosomal protein L4</fullName>
    </alternativeName>
</protein>
<sequence length="210" mass="23671">MIEIEIRDINNNIVGKKEVPDIVFNNSASESVVHTAVVAYMANQRQGTHCTKTRSEVSGGGKKPWRQKHTGRARHGSIRSPLWRKGGIVFGPKPRDYYIQLPKQMKDTALFKALTMKYRDNEILLLDNLSLNRIKTKDMVEILKNLQLEESSVLIALPEKDEKVLLSARNIPYIGVVRAEDLNAYHVAMFDKVVFTVAGLDKLLSIKGVS</sequence>
<keyword id="KW-1185">Reference proteome</keyword>
<keyword id="KW-0687">Ribonucleoprotein</keyword>
<keyword id="KW-0689">Ribosomal protein</keyword>
<keyword id="KW-0694">RNA-binding</keyword>
<keyword id="KW-0699">rRNA-binding</keyword>
<comment type="function">
    <text evidence="1">One of the primary rRNA binding proteins, this protein initially binds near the 5'-end of the 23S rRNA. It is important during the early stages of 50S assembly. It makes multiple contacts with different domains of the 23S rRNA in the assembled 50S subunit and ribosome.</text>
</comment>
<comment type="function">
    <text evidence="1">Forms part of the polypeptide exit tunnel.</text>
</comment>
<comment type="subunit">
    <text evidence="1">Part of the 50S ribosomal subunit.</text>
</comment>
<comment type="similarity">
    <text evidence="1">Belongs to the universal ribosomal protein uL4 family.</text>
</comment>
<reference key="1">
    <citation type="submission" date="2008-08" db="EMBL/GenBank/DDBJ databases">
        <title>The complete genome sequence of Thermodesulfovibrio yellowstonii strain ATCC 51303 / DSM 11347 / YP87.</title>
        <authorList>
            <person name="Dodson R.J."/>
            <person name="Durkin A.S."/>
            <person name="Wu M."/>
            <person name="Eisen J."/>
            <person name="Sutton G."/>
        </authorList>
    </citation>
    <scope>NUCLEOTIDE SEQUENCE [LARGE SCALE GENOMIC DNA]</scope>
    <source>
        <strain>ATCC 51303 / DSM 11347 / YP87</strain>
    </source>
</reference>
<accession>B5YG46</accession>
<organism>
    <name type="scientific">Thermodesulfovibrio yellowstonii (strain ATCC 51303 / DSM 11347 / YP87)</name>
    <dbReference type="NCBI Taxonomy" id="289376"/>
    <lineage>
        <taxon>Bacteria</taxon>
        <taxon>Pseudomonadati</taxon>
        <taxon>Nitrospirota</taxon>
        <taxon>Thermodesulfovibrionia</taxon>
        <taxon>Thermodesulfovibrionales</taxon>
        <taxon>Thermodesulfovibrionaceae</taxon>
        <taxon>Thermodesulfovibrio</taxon>
    </lineage>
</organism>
<proteinExistence type="inferred from homology"/>
<evidence type="ECO:0000255" key="1">
    <source>
        <dbReference type="HAMAP-Rule" id="MF_01328"/>
    </source>
</evidence>
<evidence type="ECO:0000256" key="2">
    <source>
        <dbReference type="SAM" id="MobiDB-lite"/>
    </source>
</evidence>
<evidence type="ECO:0000305" key="3"/>